<accession>B2U6Q7</accession>
<proteinExistence type="inferred from homology"/>
<gene>
    <name evidence="1" type="primary">hemL</name>
    <name type="ordered locus">Rpic_0610</name>
</gene>
<keyword id="KW-0963">Cytoplasm</keyword>
<keyword id="KW-0413">Isomerase</keyword>
<keyword id="KW-0627">Porphyrin biosynthesis</keyword>
<keyword id="KW-0663">Pyridoxal phosphate</keyword>
<sequence>MSTPSRSAALFERAQKTIPGGVNSPVRAFRSVGGIPRFIAKAAGPYLWDADGTRYIDYVGSWGPMIVGHAHPEVVRAVQEVAADSFSFGAPTEAEVVMAEEICKLVPSIEQVRLVSSGTEATMSALRLARGFTGRDLIVKFEGCYHGHADSLLVKAGSGLLTFADTTQNAPSSTGVPEDVVKHTMVLPYNDVAALREAFARHGKEIAAVIVEPVAGNMNLVRGSNEFHQAMRALCTEHGAVLIFDEVMTGFRVALGCAQALYGIKPDLTCLGKVIGGGMPAAAFGGRRDIMGFLAPLGSVYQAGTLSGNPLAVAAGLTTLRLIAAEGFHDRLATQTRKLVDGLAEIAREVGVPFAADSVGGMFGIYFREGVPTSFAEVTKSDVGRFNAFFHAMLDQGVYLAPSAFEAGFVSSTHDDAILDATFEAARKAFKAV</sequence>
<evidence type="ECO:0000255" key="1">
    <source>
        <dbReference type="HAMAP-Rule" id="MF_00375"/>
    </source>
</evidence>
<comment type="catalytic activity">
    <reaction evidence="1">
        <text>(S)-4-amino-5-oxopentanoate = 5-aminolevulinate</text>
        <dbReference type="Rhea" id="RHEA:14265"/>
        <dbReference type="ChEBI" id="CHEBI:57501"/>
        <dbReference type="ChEBI" id="CHEBI:356416"/>
        <dbReference type="EC" id="5.4.3.8"/>
    </reaction>
</comment>
<comment type="cofactor">
    <cofactor evidence="1">
        <name>pyridoxal 5'-phosphate</name>
        <dbReference type="ChEBI" id="CHEBI:597326"/>
    </cofactor>
</comment>
<comment type="pathway">
    <text evidence="1">Porphyrin-containing compound metabolism; protoporphyrin-IX biosynthesis; 5-aminolevulinate from L-glutamyl-tRNA(Glu): step 2/2.</text>
</comment>
<comment type="subunit">
    <text evidence="1">Homodimer.</text>
</comment>
<comment type="subcellular location">
    <subcellularLocation>
        <location evidence="1">Cytoplasm</location>
    </subcellularLocation>
</comment>
<comment type="similarity">
    <text evidence="1">Belongs to the class-III pyridoxal-phosphate-dependent aminotransferase family. HemL subfamily.</text>
</comment>
<feature type="chain" id="PRO_1000121912" description="Glutamate-1-semialdehyde 2,1-aminomutase">
    <location>
        <begin position="1"/>
        <end position="433"/>
    </location>
</feature>
<feature type="modified residue" description="N6-(pyridoxal phosphate)lysine" evidence="1">
    <location>
        <position position="273"/>
    </location>
</feature>
<protein>
    <recommendedName>
        <fullName evidence="1">Glutamate-1-semialdehyde 2,1-aminomutase</fullName>
        <shortName evidence="1">GSA</shortName>
        <ecNumber evidence="1">5.4.3.8</ecNumber>
    </recommendedName>
    <alternativeName>
        <fullName evidence="1">Glutamate-1-semialdehyde aminotransferase</fullName>
        <shortName evidence="1">GSA-AT</shortName>
    </alternativeName>
</protein>
<organism>
    <name type="scientific">Ralstonia pickettii (strain 12J)</name>
    <dbReference type="NCBI Taxonomy" id="402626"/>
    <lineage>
        <taxon>Bacteria</taxon>
        <taxon>Pseudomonadati</taxon>
        <taxon>Pseudomonadota</taxon>
        <taxon>Betaproteobacteria</taxon>
        <taxon>Burkholderiales</taxon>
        <taxon>Burkholderiaceae</taxon>
        <taxon>Ralstonia</taxon>
    </lineage>
</organism>
<name>GSA_RALPJ</name>
<reference key="1">
    <citation type="submission" date="2008-05" db="EMBL/GenBank/DDBJ databases">
        <title>Complete sequence of chromosome 1 of Ralstonia pickettii 12J.</title>
        <authorList>
            <person name="Lucas S."/>
            <person name="Copeland A."/>
            <person name="Lapidus A."/>
            <person name="Glavina del Rio T."/>
            <person name="Dalin E."/>
            <person name="Tice H."/>
            <person name="Bruce D."/>
            <person name="Goodwin L."/>
            <person name="Pitluck S."/>
            <person name="Meincke L."/>
            <person name="Brettin T."/>
            <person name="Detter J.C."/>
            <person name="Han C."/>
            <person name="Kuske C.R."/>
            <person name="Schmutz J."/>
            <person name="Larimer F."/>
            <person name="Land M."/>
            <person name="Hauser L."/>
            <person name="Kyrpides N."/>
            <person name="Mikhailova N."/>
            <person name="Marsh T."/>
            <person name="Richardson P."/>
        </authorList>
    </citation>
    <scope>NUCLEOTIDE SEQUENCE [LARGE SCALE GENOMIC DNA]</scope>
    <source>
        <strain>12J</strain>
    </source>
</reference>
<dbReference type="EC" id="5.4.3.8" evidence="1"/>
<dbReference type="EMBL" id="CP001068">
    <property type="protein sequence ID" value="ACD25761.1"/>
    <property type="molecule type" value="Genomic_DNA"/>
</dbReference>
<dbReference type="SMR" id="B2U6Q7"/>
<dbReference type="STRING" id="402626.Rpic_0610"/>
<dbReference type="KEGG" id="rpi:Rpic_0610"/>
<dbReference type="PATRIC" id="fig|402626.5.peg.1815"/>
<dbReference type="eggNOG" id="COG0001">
    <property type="taxonomic scope" value="Bacteria"/>
</dbReference>
<dbReference type="HOGENOM" id="CLU_016922_1_5_4"/>
<dbReference type="UniPathway" id="UPA00251">
    <property type="reaction ID" value="UER00317"/>
</dbReference>
<dbReference type="GO" id="GO:0005737">
    <property type="term" value="C:cytoplasm"/>
    <property type="evidence" value="ECO:0007669"/>
    <property type="project" value="UniProtKB-SubCell"/>
</dbReference>
<dbReference type="GO" id="GO:0042286">
    <property type="term" value="F:glutamate-1-semialdehyde 2,1-aminomutase activity"/>
    <property type="evidence" value="ECO:0007669"/>
    <property type="project" value="UniProtKB-UniRule"/>
</dbReference>
<dbReference type="GO" id="GO:0030170">
    <property type="term" value="F:pyridoxal phosphate binding"/>
    <property type="evidence" value="ECO:0007669"/>
    <property type="project" value="InterPro"/>
</dbReference>
<dbReference type="GO" id="GO:0008483">
    <property type="term" value="F:transaminase activity"/>
    <property type="evidence" value="ECO:0007669"/>
    <property type="project" value="InterPro"/>
</dbReference>
<dbReference type="GO" id="GO:0006782">
    <property type="term" value="P:protoporphyrinogen IX biosynthetic process"/>
    <property type="evidence" value="ECO:0007669"/>
    <property type="project" value="UniProtKB-UniRule"/>
</dbReference>
<dbReference type="CDD" id="cd00610">
    <property type="entry name" value="OAT_like"/>
    <property type="match status" value="1"/>
</dbReference>
<dbReference type="FunFam" id="3.40.640.10:FF:000021">
    <property type="entry name" value="Glutamate-1-semialdehyde 2,1-aminomutase"/>
    <property type="match status" value="1"/>
</dbReference>
<dbReference type="Gene3D" id="3.90.1150.10">
    <property type="entry name" value="Aspartate Aminotransferase, domain 1"/>
    <property type="match status" value="1"/>
</dbReference>
<dbReference type="Gene3D" id="3.40.640.10">
    <property type="entry name" value="Type I PLP-dependent aspartate aminotransferase-like (Major domain)"/>
    <property type="match status" value="1"/>
</dbReference>
<dbReference type="HAMAP" id="MF_00375">
    <property type="entry name" value="HemL_aminotrans_3"/>
    <property type="match status" value="1"/>
</dbReference>
<dbReference type="InterPro" id="IPR004639">
    <property type="entry name" value="4pyrrol_synth_GluAld_NH2Trfase"/>
</dbReference>
<dbReference type="InterPro" id="IPR005814">
    <property type="entry name" value="Aminotrans_3"/>
</dbReference>
<dbReference type="InterPro" id="IPR049704">
    <property type="entry name" value="Aminotrans_3_PPA_site"/>
</dbReference>
<dbReference type="InterPro" id="IPR015424">
    <property type="entry name" value="PyrdxlP-dep_Trfase"/>
</dbReference>
<dbReference type="InterPro" id="IPR015421">
    <property type="entry name" value="PyrdxlP-dep_Trfase_major"/>
</dbReference>
<dbReference type="InterPro" id="IPR015422">
    <property type="entry name" value="PyrdxlP-dep_Trfase_small"/>
</dbReference>
<dbReference type="NCBIfam" id="TIGR00713">
    <property type="entry name" value="hemL"/>
    <property type="match status" value="1"/>
</dbReference>
<dbReference type="NCBIfam" id="NF000818">
    <property type="entry name" value="PRK00062.1"/>
    <property type="match status" value="1"/>
</dbReference>
<dbReference type="PANTHER" id="PTHR43713">
    <property type="entry name" value="GLUTAMATE-1-SEMIALDEHYDE 2,1-AMINOMUTASE"/>
    <property type="match status" value="1"/>
</dbReference>
<dbReference type="PANTHER" id="PTHR43713:SF3">
    <property type="entry name" value="GLUTAMATE-1-SEMIALDEHYDE 2,1-AMINOMUTASE 1, CHLOROPLASTIC-RELATED"/>
    <property type="match status" value="1"/>
</dbReference>
<dbReference type="Pfam" id="PF00202">
    <property type="entry name" value="Aminotran_3"/>
    <property type="match status" value="1"/>
</dbReference>
<dbReference type="SUPFAM" id="SSF53383">
    <property type="entry name" value="PLP-dependent transferases"/>
    <property type="match status" value="1"/>
</dbReference>
<dbReference type="PROSITE" id="PS00600">
    <property type="entry name" value="AA_TRANSFER_CLASS_3"/>
    <property type="match status" value="1"/>
</dbReference>